<accession>B1KK45</accession>
<evidence type="ECO:0000255" key="1">
    <source>
        <dbReference type="HAMAP-Rule" id="MF_00501"/>
    </source>
</evidence>
<evidence type="ECO:0000305" key="2"/>
<comment type="function">
    <text evidence="1">Binds the 23S rRNA.</text>
</comment>
<comment type="cofactor">
    <cofactor evidence="1">
        <name>Zn(2+)</name>
        <dbReference type="ChEBI" id="CHEBI:29105"/>
    </cofactor>
    <text evidence="1">Binds 1 zinc ion per subunit.</text>
</comment>
<comment type="subunit">
    <text evidence="1">Part of the 50S ribosomal subunit.</text>
</comment>
<comment type="similarity">
    <text evidence="1">Belongs to the bacterial ribosomal protein bL31 family. Type A subfamily.</text>
</comment>
<reference key="1">
    <citation type="submission" date="2008-02" db="EMBL/GenBank/DDBJ databases">
        <title>Complete sequence of Shewanella woodyi ATCC 51908.</title>
        <authorList>
            <consortium name="US DOE Joint Genome Institute"/>
            <person name="Copeland A."/>
            <person name="Lucas S."/>
            <person name="Lapidus A."/>
            <person name="Glavina del Rio T."/>
            <person name="Dalin E."/>
            <person name="Tice H."/>
            <person name="Bruce D."/>
            <person name="Goodwin L."/>
            <person name="Pitluck S."/>
            <person name="Sims D."/>
            <person name="Brettin T."/>
            <person name="Detter J.C."/>
            <person name="Han C."/>
            <person name="Kuske C.R."/>
            <person name="Schmutz J."/>
            <person name="Larimer F."/>
            <person name="Land M."/>
            <person name="Hauser L."/>
            <person name="Kyrpides N."/>
            <person name="Lykidis A."/>
            <person name="Zhao J.-S."/>
            <person name="Richardson P."/>
        </authorList>
    </citation>
    <scope>NUCLEOTIDE SEQUENCE [LARGE SCALE GENOMIC DNA]</scope>
    <source>
        <strain>ATCC 51908 / MS32</strain>
    </source>
</reference>
<sequence length="70" mass="7497">MKPGIHPEYAEITATCTCGNVIKVNSTAGKSLHLDVCGACHPFYTGTQKIVDTGGRIDKFNKRFGALGKK</sequence>
<keyword id="KW-0479">Metal-binding</keyword>
<keyword id="KW-1185">Reference proteome</keyword>
<keyword id="KW-0687">Ribonucleoprotein</keyword>
<keyword id="KW-0689">Ribosomal protein</keyword>
<keyword id="KW-0694">RNA-binding</keyword>
<keyword id="KW-0699">rRNA-binding</keyword>
<keyword id="KW-0862">Zinc</keyword>
<dbReference type="EMBL" id="CP000961">
    <property type="protein sequence ID" value="ACA88676.1"/>
    <property type="molecule type" value="Genomic_DNA"/>
</dbReference>
<dbReference type="RefSeq" id="WP_012327002.1">
    <property type="nucleotide sequence ID" value="NC_010506.1"/>
</dbReference>
<dbReference type="SMR" id="B1KK45"/>
<dbReference type="STRING" id="392500.Swoo_4424"/>
<dbReference type="KEGG" id="swd:Swoo_4424"/>
<dbReference type="eggNOG" id="COG0254">
    <property type="taxonomic scope" value="Bacteria"/>
</dbReference>
<dbReference type="HOGENOM" id="CLU_114306_4_3_6"/>
<dbReference type="Proteomes" id="UP000002168">
    <property type="component" value="Chromosome"/>
</dbReference>
<dbReference type="GO" id="GO:1990904">
    <property type="term" value="C:ribonucleoprotein complex"/>
    <property type="evidence" value="ECO:0007669"/>
    <property type="project" value="UniProtKB-KW"/>
</dbReference>
<dbReference type="GO" id="GO:0005840">
    <property type="term" value="C:ribosome"/>
    <property type="evidence" value="ECO:0007669"/>
    <property type="project" value="UniProtKB-KW"/>
</dbReference>
<dbReference type="GO" id="GO:0046872">
    <property type="term" value="F:metal ion binding"/>
    <property type="evidence" value="ECO:0007669"/>
    <property type="project" value="UniProtKB-KW"/>
</dbReference>
<dbReference type="GO" id="GO:0019843">
    <property type="term" value="F:rRNA binding"/>
    <property type="evidence" value="ECO:0007669"/>
    <property type="project" value="UniProtKB-KW"/>
</dbReference>
<dbReference type="GO" id="GO:0003735">
    <property type="term" value="F:structural constituent of ribosome"/>
    <property type="evidence" value="ECO:0007669"/>
    <property type="project" value="InterPro"/>
</dbReference>
<dbReference type="GO" id="GO:0006412">
    <property type="term" value="P:translation"/>
    <property type="evidence" value="ECO:0007669"/>
    <property type="project" value="UniProtKB-UniRule"/>
</dbReference>
<dbReference type="Gene3D" id="4.10.830.30">
    <property type="entry name" value="Ribosomal protein L31"/>
    <property type="match status" value="1"/>
</dbReference>
<dbReference type="HAMAP" id="MF_00501">
    <property type="entry name" value="Ribosomal_bL31_1"/>
    <property type="match status" value="1"/>
</dbReference>
<dbReference type="InterPro" id="IPR034704">
    <property type="entry name" value="Ribosomal_bL28/bL31-like_sf"/>
</dbReference>
<dbReference type="InterPro" id="IPR002150">
    <property type="entry name" value="Ribosomal_bL31"/>
</dbReference>
<dbReference type="InterPro" id="IPR027491">
    <property type="entry name" value="Ribosomal_bL31_A"/>
</dbReference>
<dbReference type="InterPro" id="IPR042105">
    <property type="entry name" value="Ribosomal_bL31_sf"/>
</dbReference>
<dbReference type="NCBIfam" id="TIGR00105">
    <property type="entry name" value="L31"/>
    <property type="match status" value="1"/>
</dbReference>
<dbReference type="NCBIfam" id="NF000612">
    <property type="entry name" value="PRK00019.1"/>
    <property type="match status" value="1"/>
</dbReference>
<dbReference type="NCBIfam" id="NF001809">
    <property type="entry name" value="PRK00528.1"/>
    <property type="match status" value="1"/>
</dbReference>
<dbReference type="PANTHER" id="PTHR33280">
    <property type="entry name" value="50S RIBOSOMAL PROTEIN L31, CHLOROPLASTIC"/>
    <property type="match status" value="1"/>
</dbReference>
<dbReference type="PANTHER" id="PTHR33280:SF6">
    <property type="entry name" value="LARGE RIBOSOMAL SUBUNIT PROTEIN BL31A"/>
    <property type="match status" value="1"/>
</dbReference>
<dbReference type="Pfam" id="PF01197">
    <property type="entry name" value="Ribosomal_L31"/>
    <property type="match status" value="1"/>
</dbReference>
<dbReference type="PRINTS" id="PR01249">
    <property type="entry name" value="RIBOSOMALL31"/>
</dbReference>
<dbReference type="SUPFAM" id="SSF143800">
    <property type="entry name" value="L28p-like"/>
    <property type="match status" value="1"/>
</dbReference>
<dbReference type="PROSITE" id="PS01143">
    <property type="entry name" value="RIBOSOMAL_L31"/>
    <property type="match status" value="1"/>
</dbReference>
<gene>
    <name evidence="1" type="primary">rpmE</name>
    <name type="ordered locus">Swoo_4424</name>
</gene>
<feature type="chain" id="PRO_1000126739" description="Large ribosomal subunit protein bL31">
    <location>
        <begin position="1"/>
        <end position="70"/>
    </location>
</feature>
<feature type="binding site" evidence="1">
    <location>
        <position position="16"/>
    </location>
    <ligand>
        <name>Zn(2+)</name>
        <dbReference type="ChEBI" id="CHEBI:29105"/>
    </ligand>
</feature>
<feature type="binding site" evidence="1">
    <location>
        <position position="18"/>
    </location>
    <ligand>
        <name>Zn(2+)</name>
        <dbReference type="ChEBI" id="CHEBI:29105"/>
    </ligand>
</feature>
<feature type="binding site" evidence="1">
    <location>
        <position position="37"/>
    </location>
    <ligand>
        <name>Zn(2+)</name>
        <dbReference type="ChEBI" id="CHEBI:29105"/>
    </ligand>
</feature>
<feature type="binding site" evidence="1">
    <location>
        <position position="40"/>
    </location>
    <ligand>
        <name>Zn(2+)</name>
        <dbReference type="ChEBI" id="CHEBI:29105"/>
    </ligand>
</feature>
<name>RL31_SHEWM</name>
<proteinExistence type="inferred from homology"/>
<protein>
    <recommendedName>
        <fullName evidence="1">Large ribosomal subunit protein bL31</fullName>
    </recommendedName>
    <alternativeName>
        <fullName evidence="2">50S ribosomal protein L31</fullName>
    </alternativeName>
</protein>
<organism>
    <name type="scientific">Shewanella woodyi (strain ATCC 51908 / MS32)</name>
    <dbReference type="NCBI Taxonomy" id="392500"/>
    <lineage>
        <taxon>Bacteria</taxon>
        <taxon>Pseudomonadati</taxon>
        <taxon>Pseudomonadota</taxon>
        <taxon>Gammaproteobacteria</taxon>
        <taxon>Alteromonadales</taxon>
        <taxon>Shewanellaceae</taxon>
        <taxon>Shewanella</taxon>
    </lineage>
</organism>